<organism>
    <name type="scientific">Rickettsia rickettsii (strain Iowa)</name>
    <dbReference type="NCBI Taxonomy" id="452659"/>
    <lineage>
        <taxon>Bacteria</taxon>
        <taxon>Pseudomonadati</taxon>
        <taxon>Pseudomonadota</taxon>
        <taxon>Alphaproteobacteria</taxon>
        <taxon>Rickettsiales</taxon>
        <taxon>Rickettsiaceae</taxon>
        <taxon>Rickettsieae</taxon>
        <taxon>Rickettsia</taxon>
        <taxon>spotted fever group</taxon>
    </lineage>
</organism>
<name>MNME_RICRO</name>
<comment type="function">
    <text evidence="1">Exhibits a very high intrinsic GTPase hydrolysis rate. Involved in the addition of a carboxymethylaminomethyl (cmnm) group at the wobble position (U34) of certain tRNAs, forming tRNA-cmnm(5)s(2)U34.</text>
</comment>
<comment type="cofactor">
    <cofactor evidence="1">
        <name>K(+)</name>
        <dbReference type="ChEBI" id="CHEBI:29103"/>
    </cofactor>
    <text evidence="1">Binds 1 potassium ion per subunit.</text>
</comment>
<comment type="subunit">
    <text evidence="1">Homodimer. Heterotetramer of two MnmE and two MnmG subunits.</text>
</comment>
<comment type="subcellular location">
    <subcellularLocation>
        <location evidence="1">Cytoplasm</location>
    </subcellularLocation>
</comment>
<comment type="similarity">
    <text evidence="1">Belongs to the TRAFAC class TrmE-Era-EngA-EngB-Septin-like GTPase superfamily. TrmE GTPase family.</text>
</comment>
<sequence>METIFAQSSAFGKAGVAVFRISGPKSLEVLQLLTGRKDFKSRLMYYQQITVPETKELIDNVMVVYFKSPGSFTGEDVVEIHTHGSKAISIMLTNALLNIAGIRLAEAGEFTKRAFLNNKLDLTAAEGIADLINAETIMQHKQAIRQASGKLEALYNNWRSQLLKILSLLEAYIDFPDEDIPDTVLNEVTNTHTILVNTISEYLNDNRKGELLRSGLKLAIIGPPNVGKSSLLNFLMQRDIAIVSNIAGTTRDIIEGHLDIGGYPIILQDTAGIREESSDIIEQEGIKRAINSAKTADIKIIMFDAEKLDSSINEDIINLIDENTITIINKIDLIEASKIFSIENKYKCLRVSVKNNIALSSILKNIENIAENMAGFTETPYITNQRHRNYLQQALSHLTAFSLDNDLVLATEDIRMTARCIGAITGVINVEEILGEIFKNFCIGK</sequence>
<reference key="1">
    <citation type="journal article" date="2008" name="Infect. Immun.">
        <title>Genomic comparison of virulent Rickettsia rickettsii Sheila Smith and avirulent Rickettsia rickettsii Iowa.</title>
        <authorList>
            <person name="Ellison D.W."/>
            <person name="Clark T.R."/>
            <person name="Sturdevant D.E."/>
            <person name="Virtaneva K."/>
            <person name="Porcella S.F."/>
            <person name="Hackstadt T."/>
        </authorList>
    </citation>
    <scope>NUCLEOTIDE SEQUENCE [LARGE SCALE GENOMIC DNA]</scope>
    <source>
        <strain>Iowa</strain>
    </source>
</reference>
<evidence type="ECO:0000255" key="1">
    <source>
        <dbReference type="HAMAP-Rule" id="MF_00379"/>
    </source>
</evidence>
<accession>B0BV57</accession>
<dbReference type="EC" id="3.6.-.-" evidence="1"/>
<dbReference type="EMBL" id="CP000766">
    <property type="protein sequence ID" value="ABY73117.1"/>
    <property type="molecule type" value="Genomic_DNA"/>
</dbReference>
<dbReference type="RefSeq" id="WP_012151294.1">
    <property type="nucleotide sequence ID" value="NC_010263.3"/>
</dbReference>
<dbReference type="SMR" id="B0BV57"/>
<dbReference type="GeneID" id="79937796"/>
<dbReference type="KEGG" id="rrj:RrIowa_1383"/>
<dbReference type="eggNOG" id="COG0486">
    <property type="taxonomic scope" value="Bacteria"/>
</dbReference>
<dbReference type="HOGENOM" id="CLU_019624_3_1_5"/>
<dbReference type="Proteomes" id="UP000000796">
    <property type="component" value="Chromosome"/>
</dbReference>
<dbReference type="GO" id="GO:0005737">
    <property type="term" value="C:cytoplasm"/>
    <property type="evidence" value="ECO:0007669"/>
    <property type="project" value="UniProtKB-SubCell"/>
</dbReference>
<dbReference type="GO" id="GO:0005525">
    <property type="term" value="F:GTP binding"/>
    <property type="evidence" value="ECO:0007669"/>
    <property type="project" value="UniProtKB-UniRule"/>
</dbReference>
<dbReference type="GO" id="GO:0003924">
    <property type="term" value="F:GTPase activity"/>
    <property type="evidence" value="ECO:0007669"/>
    <property type="project" value="UniProtKB-UniRule"/>
</dbReference>
<dbReference type="GO" id="GO:0046872">
    <property type="term" value="F:metal ion binding"/>
    <property type="evidence" value="ECO:0007669"/>
    <property type="project" value="UniProtKB-KW"/>
</dbReference>
<dbReference type="GO" id="GO:0030488">
    <property type="term" value="P:tRNA methylation"/>
    <property type="evidence" value="ECO:0007669"/>
    <property type="project" value="TreeGrafter"/>
</dbReference>
<dbReference type="GO" id="GO:0002098">
    <property type="term" value="P:tRNA wobble uridine modification"/>
    <property type="evidence" value="ECO:0007669"/>
    <property type="project" value="TreeGrafter"/>
</dbReference>
<dbReference type="CDD" id="cd04164">
    <property type="entry name" value="trmE"/>
    <property type="match status" value="1"/>
</dbReference>
<dbReference type="CDD" id="cd14858">
    <property type="entry name" value="TrmE_N"/>
    <property type="match status" value="1"/>
</dbReference>
<dbReference type="FunFam" id="3.30.1360.120:FF:000007">
    <property type="entry name" value="tRNA modification GTPase GTPBP3, mitochondrial"/>
    <property type="match status" value="1"/>
</dbReference>
<dbReference type="Gene3D" id="3.40.50.300">
    <property type="entry name" value="P-loop containing nucleotide triphosphate hydrolases"/>
    <property type="match status" value="1"/>
</dbReference>
<dbReference type="Gene3D" id="3.30.1360.120">
    <property type="entry name" value="Probable tRNA modification gtpase trme, domain 1"/>
    <property type="match status" value="1"/>
</dbReference>
<dbReference type="Gene3D" id="1.20.120.430">
    <property type="entry name" value="tRNA modification GTPase MnmE domain 2"/>
    <property type="match status" value="1"/>
</dbReference>
<dbReference type="HAMAP" id="MF_00379">
    <property type="entry name" value="GTPase_MnmE"/>
    <property type="match status" value="1"/>
</dbReference>
<dbReference type="InterPro" id="IPR031168">
    <property type="entry name" value="G_TrmE"/>
</dbReference>
<dbReference type="InterPro" id="IPR006073">
    <property type="entry name" value="GTP-bd"/>
</dbReference>
<dbReference type="InterPro" id="IPR018948">
    <property type="entry name" value="GTP-bd_TrmE_N"/>
</dbReference>
<dbReference type="InterPro" id="IPR004520">
    <property type="entry name" value="GTPase_MnmE"/>
</dbReference>
<dbReference type="InterPro" id="IPR027368">
    <property type="entry name" value="MnmE_dom2"/>
</dbReference>
<dbReference type="InterPro" id="IPR025867">
    <property type="entry name" value="MnmE_helical"/>
</dbReference>
<dbReference type="InterPro" id="IPR027417">
    <property type="entry name" value="P-loop_NTPase"/>
</dbReference>
<dbReference type="InterPro" id="IPR005225">
    <property type="entry name" value="Small_GTP-bd"/>
</dbReference>
<dbReference type="InterPro" id="IPR027266">
    <property type="entry name" value="TrmE/GcvT_dom1"/>
</dbReference>
<dbReference type="NCBIfam" id="TIGR00450">
    <property type="entry name" value="mnmE_trmE_thdF"/>
    <property type="match status" value="1"/>
</dbReference>
<dbReference type="NCBIfam" id="NF003661">
    <property type="entry name" value="PRK05291.1-3"/>
    <property type="match status" value="1"/>
</dbReference>
<dbReference type="NCBIfam" id="TIGR00231">
    <property type="entry name" value="small_GTP"/>
    <property type="match status" value="1"/>
</dbReference>
<dbReference type="PANTHER" id="PTHR42714">
    <property type="entry name" value="TRNA MODIFICATION GTPASE GTPBP3"/>
    <property type="match status" value="1"/>
</dbReference>
<dbReference type="PANTHER" id="PTHR42714:SF2">
    <property type="entry name" value="TRNA MODIFICATION GTPASE GTPBP3, MITOCHONDRIAL"/>
    <property type="match status" value="1"/>
</dbReference>
<dbReference type="Pfam" id="PF01926">
    <property type="entry name" value="MMR_HSR1"/>
    <property type="match status" value="1"/>
</dbReference>
<dbReference type="Pfam" id="PF12631">
    <property type="entry name" value="MnmE_helical"/>
    <property type="match status" value="1"/>
</dbReference>
<dbReference type="Pfam" id="PF10396">
    <property type="entry name" value="TrmE_N"/>
    <property type="match status" value="1"/>
</dbReference>
<dbReference type="SUPFAM" id="SSF52540">
    <property type="entry name" value="P-loop containing nucleoside triphosphate hydrolases"/>
    <property type="match status" value="1"/>
</dbReference>
<dbReference type="SUPFAM" id="SSF116878">
    <property type="entry name" value="TrmE connector domain"/>
    <property type="match status" value="1"/>
</dbReference>
<dbReference type="PROSITE" id="PS51709">
    <property type="entry name" value="G_TRME"/>
    <property type="match status" value="1"/>
</dbReference>
<keyword id="KW-0963">Cytoplasm</keyword>
<keyword id="KW-0342">GTP-binding</keyword>
<keyword id="KW-0378">Hydrolase</keyword>
<keyword id="KW-0460">Magnesium</keyword>
<keyword id="KW-0479">Metal-binding</keyword>
<keyword id="KW-0547">Nucleotide-binding</keyword>
<keyword id="KW-0630">Potassium</keyword>
<keyword id="KW-0819">tRNA processing</keyword>
<gene>
    <name evidence="1" type="primary">mnmE</name>
    <name evidence="1" type="synonym">trmE</name>
    <name type="ordered locus">RrIowa_1383</name>
</gene>
<proteinExistence type="inferred from homology"/>
<feature type="chain" id="PRO_1000080012" description="tRNA modification GTPase MnmE">
    <location>
        <begin position="1"/>
        <end position="445"/>
    </location>
</feature>
<feature type="domain" description="TrmE-type G">
    <location>
        <begin position="215"/>
        <end position="371"/>
    </location>
</feature>
<feature type="binding site" evidence="1">
    <location>
        <position position="20"/>
    </location>
    <ligand>
        <name>(6S)-5-formyl-5,6,7,8-tetrahydrofolate</name>
        <dbReference type="ChEBI" id="CHEBI:57457"/>
    </ligand>
</feature>
<feature type="binding site" evidence="1">
    <location>
        <position position="79"/>
    </location>
    <ligand>
        <name>(6S)-5-formyl-5,6,7,8-tetrahydrofolate</name>
        <dbReference type="ChEBI" id="CHEBI:57457"/>
    </ligand>
</feature>
<feature type="binding site" evidence="1">
    <location>
        <position position="119"/>
    </location>
    <ligand>
        <name>(6S)-5-formyl-5,6,7,8-tetrahydrofolate</name>
        <dbReference type="ChEBI" id="CHEBI:57457"/>
    </ligand>
</feature>
<feature type="binding site" evidence="1">
    <location>
        <begin position="225"/>
        <end position="230"/>
    </location>
    <ligand>
        <name>GTP</name>
        <dbReference type="ChEBI" id="CHEBI:37565"/>
    </ligand>
</feature>
<feature type="binding site" evidence="1">
    <location>
        <position position="225"/>
    </location>
    <ligand>
        <name>K(+)</name>
        <dbReference type="ChEBI" id="CHEBI:29103"/>
    </ligand>
</feature>
<feature type="binding site" evidence="1">
    <location>
        <position position="229"/>
    </location>
    <ligand>
        <name>Mg(2+)</name>
        <dbReference type="ChEBI" id="CHEBI:18420"/>
    </ligand>
</feature>
<feature type="binding site" evidence="1">
    <location>
        <begin position="244"/>
        <end position="250"/>
    </location>
    <ligand>
        <name>GTP</name>
        <dbReference type="ChEBI" id="CHEBI:37565"/>
    </ligand>
</feature>
<feature type="binding site" evidence="1">
    <location>
        <position position="244"/>
    </location>
    <ligand>
        <name>K(+)</name>
        <dbReference type="ChEBI" id="CHEBI:29103"/>
    </ligand>
</feature>
<feature type="binding site" evidence="1">
    <location>
        <position position="246"/>
    </location>
    <ligand>
        <name>K(+)</name>
        <dbReference type="ChEBI" id="CHEBI:29103"/>
    </ligand>
</feature>
<feature type="binding site" evidence="1">
    <location>
        <position position="249"/>
    </location>
    <ligand>
        <name>K(+)</name>
        <dbReference type="ChEBI" id="CHEBI:29103"/>
    </ligand>
</feature>
<feature type="binding site" evidence="1">
    <location>
        <position position="250"/>
    </location>
    <ligand>
        <name>Mg(2+)</name>
        <dbReference type="ChEBI" id="CHEBI:18420"/>
    </ligand>
</feature>
<feature type="binding site" evidence="1">
    <location>
        <begin position="269"/>
        <end position="272"/>
    </location>
    <ligand>
        <name>GTP</name>
        <dbReference type="ChEBI" id="CHEBI:37565"/>
    </ligand>
</feature>
<feature type="binding site" evidence="1">
    <location>
        <position position="445"/>
    </location>
    <ligand>
        <name>(6S)-5-formyl-5,6,7,8-tetrahydrofolate</name>
        <dbReference type="ChEBI" id="CHEBI:57457"/>
    </ligand>
</feature>
<protein>
    <recommendedName>
        <fullName evidence="1">tRNA modification GTPase MnmE</fullName>
        <ecNumber evidence="1">3.6.-.-</ecNumber>
    </recommendedName>
</protein>